<reference key="1">
    <citation type="journal article" date="2005" name="Arch. Microbiol.">
        <title>The genome sequence of an anaerobic aromatic-degrading denitrifying bacterium, strain EbN1.</title>
        <authorList>
            <person name="Rabus R."/>
            <person name="Kube M."/>
            <person name="Heider J."/>
            <person name="Beck A."/>
            <person name="Heitmann K."/>
            <person name="Widdel F."/>
            <person name="Reinhardt R."/>
        </authorList>
    </citation>
    <scope>NUCLEOTIDE SEQUENCE [LARGE SCALE GENOMIC DNA]</scope>
    <source>
        <strain>DSM 19018 / LMG 30748 / EbN1</strain>
    </source>
</reference>
<comment type="function">
    <text evidence="1">Presumably involved in the processing and regular turnover of intracellular proteins. Catalyzes the removal of unsubstituted N-terminal amino acids from various peptides.</text>
</comment>
<comment type="catalytic activity">
    <reaction evidence="1">
        <text>Release of an N-terminal amino acid, Xaa-|-Yaa-, in which Xaa is preferably Leu, but may be other amino acids including Pro although not Arg or Lys, and Yaa may be Pro. Amino acid amides and methyl esters are also readily hydrolyzed, but rates on arylamides are exceedingly low.</text>
        <dbReference type="EC" id="3.4.11.1"/>
    </reaction>
</comment>
<comment type="catalytic activity">
    <reaction evidence="1">
        <text>Release of an N-terminal amino acid, preferentially leucine, but not glutamic or aspartic acids.</text>
        <dbReference type="EC" id="3.4.11.10"/>
    </reaction>
</comment>
<comment type="cofactor">
    <cofactor evidence="1">
        <name>Mn(2+)</name>
        <dbReference type="ChEBI" id="CHEBI:29035"/>
    </cofactor>
    <text evidence="1">Binds 2 manganese ions per subunit.</text>
</comment>
<comment type="subcellular location">
    <subcellularLocation>
        <location evidence="1">Cytoplasm</location>
    </subcellularLocation>
</comment>
<comment type="similarity">
    <text evidence="1">Belongs to the peptidase M17 family.</text>
</comment>
<sequence>MEFTIKTGTPEKLKTGSVVVGVFADGQLGDAAAALDKASKGKFAAILGRGDLEDKAGSLLAIHDLPGSACERVLAVSLGKRDEFGDKAWRDALVAIGKALASGAASDVAVCLTDTPVPGRDIDWVLQQLVRAIADGAYRFDATKSKDKGKDSKRRGAGKVVLLTREITASMEAAIQRGQAIAEGMALAKDLGNLPGNFCTPSYLADTAVALGKQYKLKVEVLDRDDMEKLGMGSLLSVARGSHQPPRFIVMHYKGGKSKDKPVVLVGKGITFDSGGISLKPGAEMDEMKFDMCGAASVLGTFKAIARMALPINVVGLIPTTENMPGGGATKPGDVVTSMSGQTIEILNTDAEGRLILCDALTYAERFKPACVVDIATLTGACVVALGKIPSGLLANDDALARELLDCGTVSGDRAWQLPLWDEYQELLKSNFADMGNIGGRFAGTITAACFLARFTKAYKWAHLDIAGTAWVSGDAKGATGRPVPLLAEFLIARSQGAPG</sequence>
<organism>
    <name type="scientific">Aromatoleum aromaticum (strain DSM 19018 / LMG 30748 / EbN1)</name>
    <name type="common">Azoarcus sp. (strain EbN1)</name>
    <dbReference type="NCBI Taxonomy" id="76114"/>
    <lineage>
        <taxon>Bacteria</taxon>
        <taxon>Pseudomonadati</taxon>
        <taxon>Pseudomonadota</taxon>
        <taxon>Betaproteobacteria</taxon>
        <taxon>Rhodocyclales</taxon>
        <taxon>Rhodocyclaceae</taxon>
        <taxon>Aromatoleum</taxon>
    </lineage>
</organism>
<accession>Q5NXM1</accession>
<name>AMPA_AROAE</name>
<protein>
    <recommendedName>
        <fullName evidence="1">Probable cytosol aminopeptidase</fullName>
        <ecNumber evidence="1">3.4.11.1</ecNumber>
    </recommendedName>
    <alternativeName>
        <fullName evidence="1">Leucine aminopeptidase</fullName>
        <shortName evidence="1">LAP</shortName>
        <ecNumber evidence="1">3.4.11.10</ecNumber>
    </alternativeName>
    <alternativeName>
        <fullName evidence="1">Leucyl aminopeptidase</fullName>
    </alternativeName>
</protein>
<feature type="chain" id="PRO_1000019880" description="Probable cytosol aminopeptidase">
    <location>
        <begin position="1"/>
        <end position="500"/>
    </location>
</feature>
<feature type="active site" evidence="1">
    <location>
        <position position="280"/>
    </location>
</feature>
<feature type="active site" evidence="1">
    <location>
        <position position="354"/>
    </location>
</feature>
<feature type="binding site" evidence="1">
    <location>
        <position position="268"/>
    </location>
    <ligand>
        <name>Mn(2+)</name>
        <dbReference type="ChEBI" id="CHEBI:29035"/>
        <label>2</label>
    </ligand>
</feature>
<feature type="binding site" evidence="1">
    <location>
        <position position="273"/>
    </location>
    <ligand>
        <name>Mn(2+)</name>
        <dbReference type="ChEBI" id="CHEBI:29035"/>
        <label>1</label>
    </ligand>
</feature>
<feature type="binding site" evidence="1">
    <location>
        <position position="273"/>
    </location>
    <ligand>
        <name>Mn(2+)</name>
        <dbReference type="ChEBI" id="CHEBI:29035"/>
        <label>2</label>
    </ligand>
</feature>
<feature type="binding site" evidence="1">
    <location>
        <position position="291"/>
    </location>
    <ligand>
        <name>Mn(2+)</name>
        <dbReference type="ChEBI" id="CHEBI:29035"/>
        <label>2</label>
    </ligand>
</feature>
<feature type="binding site" evidence="1">
    <location>
        <position position="350"/>
    </location>
    <ligand>
        <name>Mn(2+)</name>
        <dbReference type="ChEBI" id="CHEBI:29035"/>
        <label>1</label>
    </ligand>
</feature>
<feature type="binding site" evidence="1">
    <location>
        <position position="352"/>
    </location>
    <ligand>
        <name>Mn(2+)</name>
        <dbReference type="ChEBI" id="CHEBI:29035"/>
        <label>1</label>
    </ligand>
</feature>
<feature type="binding site" evidence="1">
    <location>
        <position position="352"/>
    </location>
    <ligand>
        <name>Mn(2+)</name>
        <dbReference type="ChEBI" id="CHEBI:29035"/>
        <label>2</label>
    </ligand>
</feature>
<keyword id="KW-0031">Aminopeptidase</keyword>
<keyword id="KW-0963">Cytoplasm</keyword>
<keyword id="KW-0378">Hydrolase</keyword>
<keyword id="KW-0464">Manganese</keyword>
<keyword id="KW-0479">Metal-binding</keyword>
<keyword id="KW-0645">Protease</keyword>
<keyword id="KW-1185">Reference proteome</keyword>
<evidence type="ECO:0000255" key="1">
    <source>
        <dbReference type="HAMAP-Rule" id="MF_00181"/>
    </source>
</evidence>
<proteinExistence type="inferred from homology"/>
<dbReference type="EC" id="3.4.11.1" evidence="1"/>
<dbReference type="EC" id="3.4.11.10" evidence="1"/>
<dbReference type="EMBL" id="CR555306">
    <property type="protein sequence ID" value="CAI10193.1"/>
    <property type="molecule type" value="Genomic_DNA"/>
</dbReference>
<dbReference type="RefSeq" id="WP_011239838.1">
    <property type="nucleotide sequence ID" value="NC_006513.1"/>
</dbReference>
<dbReference type="SMR" id="Q5NXM1"/>
<dbReference type="STRING" id="76114.ebA7174"/>
<dbReference type="MEROPS" id="M17.003"/>
<dbReference type="KEGG" id="eba:ebA7174"/>
<dbReference type="eggNOG" id="COG0260">
    <property type="taxonomic scope" value="Bacteria"/>
</dbReference>
<dbReference type="HOGENOM" id="CLU_013734_2_2_4"/>
<dbReference type="OrthoDB" id="9809354at2"/>
<dbReference type="Proteomes" id="UP000006552">
    <property type="component" value="Chromosome"/>
</dbReference>
<dbReference type="GO" id="GO:0005737">
    <property type="term" value="C:cytoplasm"/>
    <property type="evidence" value="ECO:0007669"/>
    <property type="project" value="UniProtKB-SubCell"/>
</dbReference>
<dbReference type="GO" id="GO:0030145">
    <property type="term" value="F:manganese ion binding"/>
    <property type="evidence" value="ECO:0007669"/>
    <property type="project" value="UniProtKB-UniRule"/>
</dbReference>
<dbReference type="GO" id="GO:0070006">
    <property type="term" value="F:metalloaminopeptidase activity"/>
    <property type="evidence" value="ECO:0007669"/>
    <property type="project" value="InterPro"/>
</dbReference>
<dbReference type="GO" id="GO:0006508">
    <property type="term" value="P:proteolysis"/>
    <property type="evidence" value="ECO:0007669"/>
    <property type="project" value="UniProtKB-KW"/>
</dbReference>
<dbReference type="CDD" id="cd00433">
    <property type="entry name" value="Peptidase_M17"/>
    <property type="match status" value="1"/>
</dbReference>
<dbReference type="FunFam" id="3.40.630.10:FF:000004">
    <property type="entry name" value="Probable cytosol aminopeptidase"/>
    <property type="match status" value="1"/>
</dbReference>
<dbReference type="Gene3D" id="3.40.220.10">
    <property type="entry name" value="Leucine Aminopeptidase, subunit E, domain 1"/>
    <property type="match status" value="1"/>
</dbReference>
<dbReference type="Gene3D" id="3.40.630.10">
    <property type="entry name" value="Zn peptidases"/>
    <property type="match status" value="1"/>
</dbReference>
<dbReference type="HAMAP" id="MF_00181">
    <property type="entry name" value="Cytosol_peptidase_M17"/>
    <property type="match status" value="1"/>
</dbReference>
<dbReference type="InterPro" id="IPR011356">
    <property type="entry name" value="Leucine_aapep/pepB"/>
</dbReference>
<dbReference type="InterPro" id="IPR043472">
    <property type="entry name" value="Macro_dom-like"/>
</dbReference>
<dbReference type="InterPro" id="IPR000819">
    <property type="entry name" value="Peptidase_M17_C"/>
</dbReference>
<dbReference type="InterPro" id="IPR023042">
    <property type="entry name" value="Peptidase_M17_leu_NH2_pept"/>
</dbReference>
<dbReference type="InterPro" id="IPR008283">
    <property type="entry name" value="Peptidase_M17_N"/>
</dbReference>
<dbReference type="NCBIfam" id="NF002073">
    <property type="entry name" value="PRK00913.1-2"/>
    <property type="match status" value="1"/>
</dbReference>
<dbReference type="NCBIfam" id="NF002074">
    <property type="entry name" value="PRK00913.1-4"/>
    <property type="match status" value="1"/>
</dbReference>
<dbReference type="NCBIfam" id="NF002077">
    <property type="entry name" value="PRK00913.2-4"/>
    <property type="match status" value="1"/>
</dbReference>
<dbReference type="PANTHER" id="PTHR11963:SF23">
    <property type="entry name" value="CYTOSOL AMINOPEPTIDASE"/>
    <property type="match status" value="1"/>
</dbReference>
<dbReference type="PANTHER" id="PTHR11963">
    <property type="entry name" value="LEUCINE AMINOPEPTIDASE-RELATED"/>
    <property type="match status" value="1"/>
</dbReference>
<dbReference type="Pfam" id="PF00883">
    <property type="entry name" value="Peptidase_M17"/>
    <property type="match status" value="1"/>
</dbReference>
<dbReference type="Pfam" id="PF02789">
    <property type="entry name" value="Peptidase_M17_N"/>
    <property type="match status" value="1"/>
</dbReference>
<dbReference type="PRINTS" id="PR00481">
    <property type="entry name" value="LAMNOPPTDASE"/>
</dbReference>
<dbReference type="SUPFAM" id="SSF52949">
    <property type="entry name" value="Macro domain-like"/>
    <property type="match status" value="1"/>
</dbReference>
<dbReference type="SUPFAM" id="SSF53187">
    <property type="entry name" value="Zn-dependent exopeptidases"/>
    <property type="match status" value="1"/>
</dbReference>
<dbReference type="PROSITE" id="PS00631">
    <property type="entry name" value="CYTOSOL_AP"/>
    <property type="match status" value="1"/>
</dbReference>
<gene>
    <name evidence="1" type="primary">pepA</name>
    <name type="ordered locus">AZOSEA40680</name>
    <name type="ORF">ebA7174</name>
</gene>